<accession>P9WH70</accession>
<accession>L0TBM8</accession>
<accession>Q50549</accession>
<accession>Q6MX16</accession>
<accession>Q7D680</accession>
<feature type="chain" id="PRO_0000428238" description="Ribonucleoside-diphosphate reductase subunit beta nrdF2">
    <location>
        <begin position="1"/>
        <end position="324"/>
    </location>
</feature>
<feature type="active site" evidence="2">
    <location>
        <position position="110"/>
    </location>
</feature>
<feature type="binding site" evidence="2">
    <location>
        <position position="103"/>
    </location>
    <ligand>
        <name>Fe cation</name>
        <dbReference type="ChEBI" id="CHEBI:24875"/>
        <label>1</label>
    </ligand>
</feature>
<feature type="binding site" evidence="1">
    <location>
        <position position="103"/>
    </location>
    <ligand>
        <name>Fe cation</name>
        <dbReference type="ChEBI" id="CHEBI:24875"/>
        <label>2</label>
    </ligand>
</feature>
<feature type="binding site" evidence="2">
    <location>
        <position position="106"/>
    </location>
    <ligand>
        <name>Fe cation</name>
        <dbReference type="ChEBI" id="CHEBI:24875"/>
        <label>1</label>
    </ligand>
</feature>
<feature type="binding site" evidence="1">
    <location>
        <position position="163"/>
    </location>
    <ligand>
        <name>Fe cation</name>
        <dbReference type="ChEBI" id="CHEBI:24875"/>
        <label>2</label>
    </ligand>
</feature>
<feature type="binding site" evidence="2">
    <location>
        <position position="197"/>
    </location>
    <ligand>
        <name>Fe cation</name>
        <dbReference type="ChEBI" id="CHEBI:24875"/>
        <label>1</label>
    </ligand>
</feature>
<feature type="binding site" evidence="1">
    <location>
        <position position="197"/>
    </location>
    <ligand>
        <name>Fe cation</name>
        <dbReference type="ChEBI" id="CHEBI:24875"/>
        <label>2</label>
    </ligand>
</feature>
<feature type="binding site" evidence="1">
    <location>
        <position position="200"/>
    </location>
    <ligand>
        <name>Fe cation</name>
        <dbReference type="ChEBI" id="CHEBI:24875"/>
        <label>2</label>
    </ligand>
</feature>
<reference key="1">
    <citation type="journal article" date="2002" name="J. Bacteriol.">
        <title>Whole-genome comparison of Mycobacterium tuberculosis clinical and laboratory strains.</title>
        <authorList>
            <person name="Fleischmann R.D."/>
            <person name="Alland D."/>
            <person name="Eisen J.A."/>
            <person name="Carpenter L."/>
            <person name="White O."/>
            <person name="Peterson J.D."/>
            <person name="DeBoy R.T."/>
            <person name="Dodson R.J."/>
            <person name="Gwinn M.L."/>
            <person name="Haft D.H."/>
            <person name="Hickey E.K."/>
            <person name="Kolonay J.F."/>
            <person name="Nelson W.C."/>
            <person name="Umayam L.A."/>
            <person name="Ermolaeva M.D."/>
            <person name="Salzberg S.L."/>
            <person name="Delcher A."/>
            <person name="Utterback T.R."/>
            <person name="Weidman J.F."/>
            <person name="Khouri H.M."/>
            <person name="Gill J."/>
            <person name="Mikula A."/>
            <person name="Bishai W."/>
            <person name="Jacobs W.R. Jr."/>
            <person name="Venter J.C."/>
            <person name="Fraser C.M."/>
        </authorList>
    </citation>
    <scope>NUCLEOTIDE SEQUENCE [LARGE SCALE GENOMIC DNA]</scope>
    <source>
        <strain>CDC 1551 / Oshkosh</strain>
    </source>
</reference>
<comment type="function">
    <text evidence="1">Provides the precursors necessary for DNA synthesis. Catalyzes the biosynthesis of deoxyribonucleotides from the corresponding ribonucleotides (By similarity).</text>
</comment>
<comment type="catalytic activity">
    <reaction evidence="2">
        <text>a 2'-deoxyribonucleoside 5'-diphosphate + [thioredoxin]-disulfide + H2O = a ribonucleoside 5'-diphosphate + [thioredoxin]-dithiol</text>
        <dbReference type="Rhea" id="RHEA:23252"/>
        <dbReference type="Rhea" id="RHEA-COMP:10698"/>
        <dbReference type="Rhea" id="RHEA-COMP:10700"/>
        <dbReference type="ChEBI" id="CHEBI:15377"/>
        <dbReference type="ChEBI" id="CHEBI:29950"/>
        <dbReference type="ChEBI" id="CHEBI:50058"/>
        <dbReference type="ChEBI" id="CHEBI:57930"/>
        <dbReference type="ChEBI" id="CHEBI:73316"/>
        <dbReference type="EC" id="1.17.4.1"/>
    </reaction>
</comment>
<comment type="cofactor">
    <cofactor evidence="1">
        <name>Fe cation</name>
        <dbReference type="ChEBI" id="CHEBI:24875"/>
    </cofactor>
    <text evidence="1">Binds 2 iron ions per subunit.</text>
</comment>
<comment type="subunit">
    <text evidence="1">Tetramer of two alpha and two beta subunits.</text>
</comment>
<comment type="similarity">
    <text evidence="3">Belongs to the ribonucleoside diphosphate reductase small chain family.</text>
</comment>
<evidence type="ECO:0000250" key="1"/>
<evidence type="ECO:0000255" key="2">
    <source>
        <dbReference type="PROSITE-ProRule" id="PRU10014"/>
    </source>
</evidence>
<evidence type="ECO:0000305" key="3"/>
<gene>
    <name type="primary">nrdF2</name>
    <name type="ordered locus">MT3133</name>
</gene>
<protein>
    <recommendedName>
        <fullName>Ribonucleoside-diphosphate reductase subunit beta nrdF2</fullName>
        <ecNumber>1.17.4.1</ecNumber>
    </recommendedName>
    <alternativeName>
        <fullName>Ribonucleoside-diphosphate reductase nrdF2</fullName>
    </alternativeName>
    <alternativeName>
        <fullName>Ribonucleotide reductase R2-2 small subunit</fullName>
    </alternativeName>
</protein>
<name>RIR2B_MYCTO</name>
<sequence>MTGNAKLIDRVSAINWNRLQDEKDAEVWDRLTGNFWLPEKVPVSNDIPSWGTLTAGEKQLTMRVFTGLTMLDTIQGTVGAVSLIPDALTPHEEAVLTNIAFMESVHAKSYSQIFSTLCSTAEIDDAFRWSEENRNLQRKAEIVLQYYRGDEPLKRKVASTLLESFLFYSGFYLPMYWSSRAKLTNTADMIRLIIRDEAVHGYYIGYKFQRGLALVDDVTRAELKDYTYELLFELYDNEVEYTQDLYDEVGLTEDVKKFLRYNANKALMNLGYEALFPRDETDVNPAILSALSPNADENHDFFSGSGSSYVIGKAVVTEDDDWDF</sequence>
<keyword id="KW-0215">Deoxyribonucleotide synthesis</keyword>
<keyword id="KW-0408">Iron</keyword>
<keyword id="KW-0479">Metal-binding</keyword>
<keyword id="KW-0560">Oxidoreductase</keyword>
<keyword id="KW-1185">Reference proteome</keyword>
<dbReference type="EC" id="1.17.4.1"/>
<dbReference type="EMBL" id="AE000516">
    <property type="protein sequence ID" value="AAK47464.1"/>
    <property type="molecule type" value="Genomic_DNA"/>
</dbReference>
<dbReference type="PIR" id="C70861">
    <property type="entry name" value="C70861"/>
</dbReference>
<dbReference type="SMR" id="P9WH70"/>
<dbReference type="KEGG" id="mtc:MT3133"/>
<dbReference type="PATRIC" id="fig|83331.31.peg.3377"/>
<dbReference type="HOGENOM" id="CLU_052495_0_0_11"/>
<dbReference type="Proteomes" id="UP000001020">
    <property type="component" value="Chromosome"/>
</dbReference>
<dbReference type="GO" id="GO:0005971">
    <property type="term" value="C:ribonucleoside-diphosphate reductase complex"/>
    <property type="evidence" value="ECO:0007669"/>
    <property type="project" value="InterPro"/>
</dbReference>
<dbReference type="GO" id="GO:0046872">
    <property type="term" value="F:metal ion binding"/>
    <property type="evidence" value="ECO:0007669"/>
    <property type="project" value="UniProtKB-KW"/>
</dbReference>
<dbReference type="GO" id="GO:0004748">
    <property type="term" value="F:ribonucleoside-diphosphate reductase activity, thioredoxin disulfide as acceptor"/>
    <property type="evidence" value="ECO:0007669"/>
    <property type="project" value="UniProtKB-EC"/>
</dbReference>
<dbReference type="GO" id="GO:0009263">
    <property type="term" value="P:deoxyribonucleotide biosynthetic process"/>
    <property type="evidence" value="ECO:0007669"/>
    <property type="project" value="UniProtKB-KW"/>
</dbReference>
<dbReference type="CDD" id="cd01049">
    <property type="entry name" value="RNRR2"/>
    <property type="match status" value="1"/>
</dbReference>
<dbReference type="FunFam" id="1.10.620.20:FF:000005">
    <property type="entry name" value="Ribonucleoside-diphosphate reductase subunit beta"/>
    <property type="match status" value="1"/>
</dbReference>
<dbReference type="Gene3D" id="1.10.620.20">
    <property type="entry name" value="Ribonucleotide Reductase, subunit A"/>
    <property type="match status" value="1"/>
</dbReference>
<dbReference type="InterPro" id="IPR009078">
    <property type="entry name" value="Ferritin-like_SF"/>
</dbReference>
<dbReference type="InterPro" id="IPR012348">
    <property type="entry name" value="RNR-like"/>
</dbReference>
<dbReference type="InterPro" id="IPR026494">
    <property type="entry name" value="RNR_NrdF-like"/>
</dbReference>
<dbReference type="InterPro" id="IPR033909">
    <property type="entry name" value="RNR_small"/>
</dbReference>
<dbReference type="InterPro" id="IPR030475">
    <property type="entry name" value="RNR_small_AS"/>
</dbReference>
<dbReference type="InterPro" id="IPR000358">
    <property type="entry name" value="RNR_small_fam"/>
</dbReference>
<dbReference type="NCBIfam" id="NF007182">
    <property type="entry name" value="PRK09614.1-1"/>
    <property type="match status" value="1"/>
</dbReference>
<dbReference type="NCBIfam" id="NF007183">
    <property type="entry name" value="PRK09614.1-2"/>
    <property type="match status" value="1"/>
</dbReference>
<dbReference type="NCBIfam" id="NF010572">
    <property type="entry name" value="PRK13965.1"/>
    <property type="match status" value="1"/>
</dbReference>
<dbReference type="NCBIfam" id="NF010573">
    <property type="entry name" value="PRK13966.1"/>
    <property type="match status" value="1"/>
</dbReference>
<dbReference type="NCBIfam" id="TIGR04171">
    <property type="entry name" value="RNR_1b_NrdF"/>
    <property type="match status" value="1"/>
</dbReference>
<dbReference type="PANTHER" id="PTHR23409">
    <property type="entry name" value="RIBONUCLEOSIDE-DIPHOSPHATE REDUCTASE SMALL CHAIN"/>
    <property type="match status" value="1"/>
</dbReference>
<dbReference type="PANTHER" id="PTHR23409:SF18">
    <property type="entry name" value="RIBONUCLEOSIDE-DIPHOSPHATE REDUCTASE SUBUNIT M2"/>
    <property type="match status" value="1"/>
</dbReference>
<dbReference type="Pfam" id="PF00268">
    <property type="entry name" value="Ribonuc_red_sm"/>
    <property type="match status" value="1"/>
</dbReference>
<dbReference type="PIRSF" id="PIRSF000355">
    <property type="entry name" value="NrdB"/>
    <property type="match status" value="1"/>
</dbReference>
<dbReference type="SUPFAM" id="SSF47240">
    <property type="entry name" value="Ferritin-like"/>
    <property type="match status" value="1"/>
</dbReference>
<dbReference type="PROSITE" id="PS00368">
    <property type="entry name" value="RIBORED_SMALL"/>
    <property type="match status" value="1"/>
</dbReference>
<proteinExistence type="inferred from homology"/>
<organism>
    <name type="scientific">Mycobacterium tuberculosis (strain CDC 1551 / Oshkosh)</name>
    <dbReference type="NCBI Taxonomy" id="83331"/>
    <lineage>
        <taxon>Bacteria</taxon>
        <taxon>Bacillati</taxon>
        <taxon>Actinomycetota</taxon>
        <taxon>Actinomycetes</taxon>
        <taxon>Mycobacteriales</taxon>
        <taxon>Mycobacteriaceae</taxon>
        <taxon>Mycobacterium</taxon>
        <taxon>Mycobacterium tuberculosis complex</taxon>
    </lineage>
</organism>